<proteinExistence type="inferred from homology"/>
<sequence length="231" mass="25865">MRLDKFIAQQLGVSRAIAGREIRGNRVTVDGEIVRNAAFKLLPEHDVAYDGNPLAQQHGPRYFMLNKPQGYVCSTDDPDHPTVLYFLDEPVAWKLHAAGRLDIDTTGLVLMTDDGQWSHRITSPRHHCEKTYLVTLESPVADDTAEQFAKGVQLHNEKDLTKPAVLEVITPTQVRLTISEGRYHQVKRMFAAVGNHVVELHRERIGGITLDADLAPGEYRPLTEEEIASVV</sequence>
<evidence type="ECO:0000250" key="1"/>
<evidence type="ECO:0000255" key="2">
    <source>
        <dbReference type="PROSITE-ProRule" id="PRU00182"/>
    </source>
</evidence>
<evidence type="ECO:0000305" key="3"/>
<feature type="chain" id="PRO_0000099967" description="Ribosomal small subunit pseudouridine synthase A">
    <location>
        <begin position="1"/>
        <end position="231"/>
    </location>
</feature>
<feature type="domain" description="S4 RNA-binding" evidence="2">
    <location>
        <begin position="1"/>
        <end position="68"/>
    </location>
</feature>
<feature type="active site" description="Nucleophile" evidence="1">
    <location>
        <position position="102"/>
    </location>
</feature>
<comment type="function">
    <text evidence="1">Responsible for synthesis of pseudouridine from uracil-516 in 16S ribosomal RNA.</text>
</comment>
<comment type="catalytic activity">
    <reaction>
        <text>uridine(516) in 16S rRNA = pseudouridine(516) in 16S rRNA</text>
        <dbReference type="Rhea" id="RHEA:38867"/>
        <dbReference type="Rhea" id="RHEA-COMP:10089"/>
        <dbReference type="Rhea" id="RHEA-COMP:10090"/>
        <dbReference type="ChEBI" id="CHEBI:65314"/>
        <dbReference type="ChEBI" id="CHEBI:65315"/>
        <dbReference type="EC" id="5.4.99.19"/>
    </reaction>
</comment>
<comment type="subunit">
    <text evidence="1">Monomer.</text>
</comment>
<comment type="similarity">
    <text evidence="3">Belongs to the pseudouridine synthase RsuA family.</text>
</comment>
<comment type="sequence caution" evidence="3">
    <conflict type="erroneous initiation">
        <sequence resource="EMBL-CDS" id="AAN81174"/>
    </conflict>
</comment>
<gene>
    <name type="primary">rsuA</name>
    <name type="ordered locus">c2720</name>
</gene>
<name>RSUA_ECOL6</name>
<dbReference type="EC" id="5.4.99.19"/>
<dbReference type="EMBL" id="AE014075">
    <property type="protein sequence ID" value="AAN81174.1"/>
    <property type="status" value="ALT_INIT"/>
    <property type="molecule type" value="Genomic_DNA"/>
</dbReference>
<dbReference type="RefSeq" id="WP_001234850.1">
    <property type="nucleotide sequence ID" value="NZ_CP051263.1"/>
</dbReference>
<dbReference type="SMR" id="P0AA44"/>
<dbReference type="STRING" id="199310.c2720"/>
<dbReference type="GeneID" id="75206437"/>
<dbReference type="KEGG" id="ecc:c2720"/>
<dbReference type="eggNOG" id="COG1187">
    <property type="taxonomic scope" value="Bacteria"/>
</dbReference>
<dbReference type="HOGENOM" id="CLU_024979_1_2_6"/>
<dbReference type="Proteomes" id="UP000001410">
    <property type="component" value="Chromosome"/>
</dbReference>
<dbReference type="GO" id="GO:0160136">
    <property type="term" value="F:16S rRNA pseudouridine(516) synthase activity"/>
    <property type="evidence" value="ECO:0007669"/>
    <property type="project" value="UniProtKB-EC"/>
</dbReference>
<dbReference type="GO" id="GO:0003723">
    <property type="term" value="F:RNA binding"/>
    <property type="evidence" value="ECO:0007669"/>
    <property type="project" value="UniProtKB-KW"/>
</dbReference>
<dbReference type="GO" id="GO:0000455">
    <property type="term" value="P:enzyme-directed rRNA pseudouridine synthesis"/>
    <property type="evidence" value="ECO:0007669"/>
    <property type="project" value="UniProtKB-ARBA"/>
</dbReference>
<dbReference type="CDD" id="cd02553">
    <property type="entry name" value="PseudoU_synth_RsuA"/>
    <property type="match status" value="1"/>
</dbReference>
<dbReference type="CDD" id="cd00165">
    <property type="entry name" value="S4"/>
    <property type="match status" value="1"/>
</dbReference>
<dbReference type="FunFam" id="3.10.290.10:FF:000009">
    <property type="entry name" value="Pseudouridine synthase"/>
    <property type="match status" value="1"/>
</dbReference>
<dbReference type="FunFam" id="3.30.70.1560:FF:000001">
    <property type="entry name" value="Pseudouridine synthase"/>
    <property type="match status" value="1"/>
</dbReference>
<dbReference type="FunFam" id="3.30.70.580:FF:000004">
    <property type="entry name" value="Pseudouridine synthase"/>
    <property type="match status" value="1"/>
</dbReference>
<dbReference type="Gene3D" id="3.30.70.1560">
    <property type="entry name" value="Alpha-L RNA-binding motif"/>
    <property type="match status" value="1"/>
</dbReference>
<dbReference type="Gene3D" id="3.30.70.580">
    <property type="entry name" value="Pseudouridine synthase I, catalytic domain, N-terminal subdomain"/>
    <property type="match status" value="1"/>
</dbReference>
<dbReference type="Gene3D" id="3.10.290.10">
    <property type="entry name" value="RNA-binding S4 domain"/>
    <property type="match status" value="1"/>
</dbReference>
<dbReference type="InterPro" id="IPR042092">
    <property type="entry name" value="PsdUridine_s_RsuA/RluB/E/F_cat"/>
</dbReference>
<dbReference type="InterPro" id="IPR020103">
    <property type="entry name" value="PsdUridine_synth_cat_dom_sf"/>
</dbReference>
<dbReference type="InterPro" id="IPR006145">
    <property type="entry name" value="PsdUridine_synth_RsuA/RluA"/>
</dbReference>
<dbReference type="InterPro" id="IPR000748">
    <property type="entry name" value="PsdUridine_synth_RsuA/RluB/E/F"/>
</dbReference>
<dbReference type="InterPro" id="IPR018496">
    <property type="entry name" value="PsdUridine_synth_RsuA/RluB_CS"/>
</dbReference>
<dbReference type="InterPro" id="IPR050343">
    <property type="entry name" value="RsuA_PseudoU_synthase"/>
</dbReference>
<dbReference type="InterPro" id="IPR002942">
    <property type="entry name" value="S4_RNA-bd"/>
</dbReference>
<dbReference type="InterPro" id="IPR036986">
    <property type="entry name" value="S4_RNA-bd_sf"/>
</dbReference>
<dbReference type="InterPro" id="IPR020094">
    <property type="entry name" value="TruA/RsuA/RluB/E/F_N"/>
</dbReference>
<dbReference type="NCBIfam" id="NF008097">
    <property type="entry name" value="PRK10839.1"/>
    <property type="match status" value="1"/>
</dbReference>
<dbReference type="NCBIfam" id="TIGR00093">
    <property type="entry name" value="pseudouridine synthase"/>
    <property type="match status" value="1"/>
</dbReference>
<dbReference type="PANTHER" id="PTHR47683:SF4">
    <property type="entry name" value="PSEUDOURIDINE SYNTHASE"/>
    <property type="match status" value="1"/>
</dbReference>
<dbReference type="PANTHER" id="PTHR47683">
    <property type="entry name" value="PSEUDOURIDINE SYNTHASE FAMILY PROTEIN-RELATED"/>
    <property type="match status" value="1"/>
</dbReference>
<dbReference type="Pfam" id="PF00849">
    <property type="entry name" value="PseudoU_synth_2"/>
    <property type="match status" value="1"/>
</dbReference>
<dbReference type="Pfam" id="PF01479">
    <property type="entry name" value="S4"/>
    <property type="match status" value="1"/>
</dbReference>
<dbReference type="SMART" id="SM00363">
    <property type="entry name" value="S4"/>
    <property type="match status" value="1"/>
</dbReference>
<dbReference type="SUPFAM" id="SSF55174">
    <property type="entry name" value="Alpha-L RNA-binding motif"/>
    <property type="match status" value="1"/>
</dbReference>
<dbReference type="SUPFAM" id="SSF55120">
    <property type="entry name" value="Pseudouridine synthase"/>
    <property type="match status" value="1"/>
</dbReference>
<dbReference type="PROSITE" id="PS01149">
    <property type="entry name" value="PSI_RSU"/>
    <property type="match status" value="1"/>
</dbReference>
<dbReference type="PROSITE" id="PS50889">
    <property type="entry name" value="S4"/>
    <property type="match status" value="1"/>
</dbReference>
<keyword id="KW-0413">Isomerase</keyword>
<keyword id="KW-1185">Reference proteome</keyword>
<keyword id="KW-0694">RNA-binding</keyword>
<keyword id="KW-0698">rRNA processing</keyword>
<organism>
    <name type="scientific">Escherichia coli O6:H1 (strain CFT073 / ATCC 700928 / UPEC)</name>
    <dbReference type="NCBI Taxonomy" id="199310"/>
    <lineage>
        <taxon>Bacteria</taxon>
        <taxon>Pseudomonadati</taxon>
        <taxon>Pseudomonadota</taxon>
        <taxon>Gammaproteobacteria</taxon>
        <taxon>Enterobacterales</taxon>
        <taxon>Enterobacteriaceae</taxon>
        <taxon>Escherichia</taxon>
    </lineage>
</organism>
<protein>
    <recommendedName>
        <fullName>Ribosomal small subunit pseudouridine synthase A</fullName>
        <ecNumber>5.4.99.19</ecNumber>
    </recommendedName>
    <alternativeName>
        <fullName>16S pseudouridylate 516 synthase</fullName>
    </alternativeName>
    <alternativeName>
        <fullName>16S rRNA pseudouridine(516) synthase</fullName>
    </alternativeName>
    <alternativeName>
        <fullName>rRNA pseudouridylate synthase A</fullName>
    </alternativeName>
    <alternativeName>
        <fullName>rRNA-uridine isomerase A</fullName>
    </alternativeName>
</protein>
<accession>P0AA44</accession>
<accession>P33918</accession>
<reference key="1">
    <citation type="journal article" date="2002" name="Proc. Natl. Acad. Sci. U.S.A.">
        <title>Extensive mosaic structure revealed by the complete genome sequence of uropathogenic Escherichia coli.</title>
        <authorList>
            <person name="Welch R.A."/>
            <person name="Burland V."/>
            <person name="Plunkett G. III"/>
            <person name="Redford P."/>
            <person name="Roesch P."/>
            <person name="Rasko D."/>
            <person name="Buckles E.L."/>
            <person name="Liou S.-R."/>
            <person name="Boutin A."/>
            <person name="Hackett J."/>
            <person name="Stroud D."/>
            <person name="Mayhew G.F."/>
            <person name="Rose D.J."/>
            <person name="Zhou S."/>
            <person name="Schwartz D.C."/>
            <person name="Perna N.T."/>
            <person name="Mobley H.L.T."/>
            <person name="Donnenberg M.S."/>
            <person name="Blattner F.R."/>
        </authorList>
    </citation>
    <scope>NUCLEOTIDE SEQUENCE [LARGE SCALE GENOMIC DNA]</scope>
    <source>
        <strain>CFT073 / ATCC 700928 / UPEC</strain>
    </source>
</reference>